<sequence length="188" mass="20909">MKGLIIVGSAKVGSHTTALSQYLKGHFEEHDFDVEIFDLAEQPIHQLDVSGASNLSESYKNNLQTLKTKAREADFFVLGSPNYHGSYSGILKNALDHLTMDDFKMKPVGLIGNSGGIVSSEPLSHLRLIVRSLLGIAVPTQIATHDTDFKKLDDGTYYLANEEFQLRARLFVDQIISFVKNSPYEHLK</sequence>
<organism>
    <name type="scientific">Staphylococcus saprophyticus subsp. saprophyticus (strain ATCC 15305 / DSM 20229 / NCIMB 8711 / NCTC 7292 / S-41)</name>
    <dbReference type="NCBI Taxonomy" id="342451"/>
    <lineage>
        <taxon>Bacteria</taxon>
        <taxon>Bacillati</taxon>
        <taxon>Bacillota</taxon>
        <taxon>Bacilli</taxon>
        <taxon>Bacillales</taxon>
        <taxon>Staphylococcaceae</taxon>
        <taxon>Staphylococcus</taxon>
    </lineage>
</organism>
<dbReference type="EC" id="1.7.-.-"/>
<dbReference type="EMBL" id="AP008934">
    <property type="protein sequence ID" value="BAE19299.1"/>
    <property type="molecule type" value="Genomic_DNA"/>
</dbReference>
<dbReference type="RefSeq" id="WP_011303787.1">
    <property type="nucleotide sequence ID" value="NZ_MTGA01000039.1"/>
</dbReference>
<dbReference type="SMR" id="Q49VB1"/>
<dbReference type="GeneID" id="3616400"/>
<dbReference type="KEGG" id="ssp:SSP2154"/>
<dbReference type="PATRIC" id="fig|342451.11.peg.2145"/>
<dbReference type="eggNOG" id="COG0431">
    <property type="taxonomic scope" value="Bacteria"/>
</dbReference>
<dbReference type="HOGENOM" id="CLU_055322_1_2_9"/>
<dbReference type="OrthoDB" id="9790975at2"/>
<dbReference type="Proteomes" id="UP000006371">
    <property type="component" value="Chromosome"/>
</dbReference>
<dbReference type="GO" id="GO:0005829">
    <property type="term" value="C:cytosol"/>
    <property type="evidence" value="ECO:0007669"/>
    <property type="project" value="TreeGrafter"/>
</dbReference>
<dbReference type="GO" id="GO:0010181">
    <property type="term" value="F:FMN binding"/>
    <property type="evidence" value="ECO:0007669"/>
    <property type="project" value="TreeGrafter"/>
</dbReference>
<dbReference type="GO" id="GO:0016491">
    <property type="term" value="F:oxidoreductase activity"/>
    <property type="evidence" value="ECO:0007669"/>
    <property type="project" value="UniProtKB-KW"/>
</dbReference>
<dbReference type="Gene3D" id="3.40.50.360">
    <property type="match status" value="1"/>
</dbReference>
<dbReference type="InterPro" id="IPR029039">
    <property type="entry name" value="Flavoprotein-like_sf"/>
</dbReference>
<dbReference type="InterPro" id="IPR005025">
    <property type="entry name" value="FMN_Rdtase-like_dom"/>
</dbReference>
<dbReference type="InterPro" id="IPR050712">
    <property type="entry name" value="NAD(P)H-dep_reductase"/>
</dbReference>
<dbReference type="PANTHER" id="PTHR30543">
    <property type="entry name" value="CHROMATE REDUCTASE"/>
    <property type="match status" value="1"/>
</dbReference>
<dbReference type="PANTHER" id="PTHR30543:SF21">
    <property type="entry name" value="NAD(P)H-DEPENDENT FMN REDUCTASE LOT6"/>
    <property type="match status" value="1"/>
</dbReference>
<dbReference type="Pfam" id="PF03358">
    <property type="entry name" value="FMN_red"/>
    <property type="match status" value="1"/>
</dbReference>
<dbReference type="SUPFAM" id="SSF52218">
    <property type="entry name" value="Flavoproteins"/>
    <property type="match status" value="1"/>
</dbReference>
<reference key="1">
    <citation type="journal article" date="2005" name="Proc. Natl. Acad. Sci. U.S.A.">
        <title>Whole genome sequence of Staphylococcus saprophyticus reveals the pathogenesis of uncomplicated urinary tract infection.</title>
        <authorList>
            <person name="Kuroda M."/>
            <person name="Yamashita A."/>
            <person name="Hirakawa H."/>
            <person name="Kumano M."/>
            <person name="Morikawa K."/>
            <person name="Higashide M."/>
            <person name="Maruyama A."/>
            <person name="Inose Y."/>
            <person name="Matoba K."/>
            <person name="Toh H."/>
            <person name="Kuhara S."/>
            <person name="Hattori M."/>
            <person name="Ohta T."/>
        </authorList>
    </citation>
    <scope>NUCLEOTIDE SEQUENCE [LARGE SCALE GENOMIC DNA]</scope>
    <source>
        <strain>ATCC 15305 / DSM 20229 / NCIMB 8711 / NCTC 7292 / S-41</strain>
    </source>
</reference>
<proteinExistence type="inferred from homology"/>
<accession>Q49VB1</accession>
<comment type="function">
    <text evidence="1">Catalyzes the reductive cleavage of azo bond in aromatic azo compounds to the corresponding amines. Requires NADPH, but not NADH, as an electron donor for its activity (By similarity).</text>
</comment>
<comment type="cofactor">
    <cofactor evidence="1">
        <name>FMN</name>
        <dbReference type="ChEBI" id="CHEBI:58210"/>
    </cofactor>
</comment>
<comment type="subunit">
    <text evidence="1">Homotetramer.</text>
</comment>
<comment type="similarity">
    <text evidence="2">Belongs to the azoreductase type 2 family.</text>
</comment>
<name>AZO1_STAS1</name>
<gene>
    <name type="primary">azo1</name>
    <name type="ordered locus">SSP2154</name>
</gene>
<feature type="chain" id="PRO_0000246000" description="FMN-dependent NADPH-azoreductase">
    <location>
        <begin position="1"/>
        <end position="188"/>
    </location>
</feature>
<protein>
    <recommendedName>
        <fullName>FMN-dependent NADPH-azoreductase</fullName>
        <ecNumber>1.7.-.-</ecNumber>
    </recommendedName>
    <alternativeName>
        <fullName>NADPH-dependent flavo-azoreductase</fullName>
    </alternativeName>
    <alternativeName>
        <fullName>NADPH-flavin azoreductase</fullName>
    </alternativeName>
</protein>
<evidence type="ECO:0000250" key="1"/>
<evidence type="ECO:0000305" key="2"/>
<keyword id="KW-0285">Flavoprotein</keyword>
<keyword id="KW-0288">FMN</keyword>
<keyword id="KW-0521">NADP</keyword>
<keyword id="KW-0560">Oxidoreductase</keyword>
<keyword id="KW-1185">Reference proteome</keyword>